<sequence length="89" mass="10059">MTTSQKHRDFVAEPMGEKPVGSLAGIGEVLGKKLEERGFDKAYVVLGQFLVLKKDEDLFREWLKDTCGANAKQSRDCFGCLREWCDAFL</sequence>
<comment type="function">
    <text evidence="1">Non-specific DNA-binding protein that plays key roles in mitotic nuclear reassembly, chromatin organization, DNA damage response, gene expression and intrinsic immunity against foreign DNA. Contains two non-specific double-stranded DNA (dsDNA)-binding sites which promote DNA cross-bridging. Plays a key role in nuclear membrane reformation at the end of mitosis by driving formation of a single nucleus in a spindle-independent manner. Transiently cross-bridges anaphase chromosomes via its ability to bridge distant DNA sites, leading to the formation of a dense chromatin network at the chromosome ensemble surface that limits membranes to the surface. Also acts as a negative regulator of innate immune activation by restricting CGAS activity toward self-DNA upon acute loss of nuclear membrane integrity. Outcompetes CGAS for DNA-binding, thereby preventing CGAS activation and subsequent damaging autoinflammatory responses. Also involved in DNA damage response: interacts with PARP1 in response to oxidative stress, thereby inhibiting the ADP-ribosyltransferase activity of PARP1. Involved in the recognition of exogenous dsDNA in the cytosol: associates with exogenous dsDNA immediately after its appearance in the cytosol at endosome breakdown and is required to avoid autophagy. In case of poxvirus infection, has an antiviral activity by blocking viral DNA replication.</text>
</comment>
<comment type="subunit">
    <text evidence="1">Homodimer. Heterodimerizes with BANF2. Interacts with ANKLE2/LEM4, leading to decreased phosphorylation by VRK1 and promoting dephosphorylation by protein phosphatase 2A (PP2A). Binds non-specifically to double-stranded DNA, and is found as a hexamer or dodecamer upon DNA binding. Binds to LEM domain-containing nuclear proteins such as LEMD3/MAN1, TMPO/LAP2 and EMD (emerin). Interacts with ANKLE1 (via LEM domain); the interaction may favor BANF1 dimerization. Interacts with CRX and LMNA (lamin-A). Binds linker histone H1.1 and core histones H3. Interacts with LEMD2 (via LEM domain). Interacts with PARP1; interaction takes place in response to oxidative DNA damage.</text>
</comment>
<comment type="subcellular location">
    <subcellularLocation>
        <location evidence="1">Nucleus</location>
    </subcellularLocation>
    <subcellularLocation>
        <location evidence="1">Chromosome</location>
    </subcellularLocation>
    <subcellularLocation>
        <location evidence="1">Nucleus envelope</location>
    </subcellularLocation>
    <subcellularLocation>
        <location evidence="1">Cytoplasm</location>
    </subcellularLocation>
    <text evidence="1">Significantly enriched at the nuclear inner membrane, diffusely throughout the nucleus during interphase and concentrated at the chromosomes during the M-phase. The phosphorylated form (by VRK1) shows a cytoplasmic localization whereas the unphosphorylated form locates almost exclusively in the nucleus. May be included in HIV-1 virions via its interaction with viral GAG polyprotein.</text>
</comment>
<comment type="domain">
    <text evidence="1">Has a helix-hairpin-helix (HhH) structural motif conserved among proteins that bind non-specifically to DNA.</text>
</comment>
<comment type="domain">
    <text evidence="1">LEM domain proteins bind centrally on the BAF dimer.</text>
</comment>
<comment type="PTM">
    <text evidence="1">Ser-4 is the major site of phosphorylation as compared to Thr-2 and Thr-3. Phosphorylation on Thr-2; Thr-3 and Ser-4 disrupts its ability to bind DNA and reduces its ability to bind LEM domain-containing proteins. Non phosphorylated BAF seems to enhance binding between EMD and LMNA. Dephosphorylated by protein phosphatase 2A (PP2A) following interaction with ANKLE2/LEM4 during mitotic exit, leading to mitotic nuclear envelope reassembly.</text>
</comment>
<comment type="similarity">
    <text evidence="2">Belongs to the BAF family.</text>
</comment>
<evidence type="ECO:0000250" key="1">
    <source>
        <dbReference type="UniProtKB" id="O75531"/>
    </source>
</evidence>
<evidence type="ECO:0000305" key="2"/>
<gene>
    <name type="primary">BANF1</name>
</gene>
<proteinExistence type="inferred from homology"/>
<keyword id="KW-0007">Acetylation</keyword>
<keyword id="KW-0158">Chromosome</keyword>
<keyword id="KW-0963">Cytoplasm</keyword>
<keyword id="KW-0238">DNA-binding</keyword>
<keyword id="KW-0539">Nucleus</keyword>
<keyword id="KW-0597">Phosphoprotein</keyword>
<keyword id="KW-1185">Reference proteome</keyword>
<dbReference type="EMBL" id="CR858534">
    <property type="protein sequence ID" value="CAH90761.1"/>
    <property type="molecule type" value="mRNA"/>
</dbReference>
<dbReference type="RefSeq" id="NP_001125427.1">
    <property type="nucleotide sequence ID" value="NM_001131955.1"/>
</dbReference>
<dbReference type="RefSeq" id="XP_009244397.1">
    <property type="nucleotide sequence ID" value="XM_009246122.1"/>
</dbReference>
<dbReference type="RefSeq" id="XP_009244398.1">
    <property type="nucleotide sequence ID" value="XM_009246123.4"/>
</dbReference>
<dbReference type="RefSeq" id="XP_009244399.1">
    <property type="nucleotide sequence ID" value="XM_009246124.4"/>
</dbReference>
<dbReference type="RefSeq" id="XP_054379667.1">
    <property type="nucleotide sequence ID" value="XM_054523692.2"/>
</dbReference>
<dbReference type="RefSeq" id="XP_054379668.1">
    <property type="nucleotide sequence ID" value="XM_054523693.2"/>
</dbReference>
<dbReference type="SMR" id="Q5RBU9"/>
<dbReference type="FunCoup" id="Q5RBU9">
    <property type="interactions" value="3383"/>
</dbReference>
<dbReference type="STRING" id="9601.ENSPPYP00000003516"/>
<dbReference type="Ensembl" id="ENSPPYT00000039646.1">
    <property type="protein sequence ID" value="ENSPPYP00000029343.1"/>
    <property type="gene ID" value="ENSPPYG00000030918.1"/>
</dbReference>
<dbReference type="GeneID" id="100172334"/>
<dbReference type="KEGG" id="pon:100172334"/>
<dbReference type="CTD" id="8815"/>
<dbReference type="eggNOG" id="KOG4233">
    <property type="taxonomic scope" value="Eukaryota"/>
</dbReference>
<dbReference type="GeneTree" id="ENSGT00390000018613"/>
<dbReference type="HOGENOM" id="CLU_167806_0_0_1"/>
<dbReference type="InParanoid" id="Q5RBU9"/>
<dbReference type="OMA" id="SKQQGDC"/>
<dbReference type="OrthoDB" id="9997163at2759"/>
<dbReference type="TreeFam" id="TF315060"/>
<dbReference type="Proteomes" id="UP000001595">
    <property type="component" value="Chromosome 11"/>
</dbReference>
<dbReference type="GO" id="GO:0000785">
    <property type="term" value="C:chromatin"/>
    <property type="evidence" value="ECO:0000250"/>
    <property type="project" value="UniProtKB"/>
</dbReference>
<dbReference type="GO" id="GO:0000793">
    <property type="term" value="C:condensed chromosome"/>
    <property type="evidence" value="ECO:0007669"/>
    <property type="project" value="Ensembl"/>
</dbReference>
<dbReference type="GO" id="GO:0005829">
    <property type="term" value="C:cytosol"/>
    <property type="evidence" value="ECO:0007669"/>
    <property type="project" value="Ensembl"/>
</dbReference>
<dbReference type="GO" id="GO:0005635">
    <property type="term" value="C:nuclear envelope"/>
    <property type="evidence" value="ECO:0007669"/>
    <property type="project" value="UniProtKB-SubCell"/>
</dbReference>
<dbReference type="GO" id="GO:0005654">
    <property type="term" value="C:nucleoplasm"/>
    <property type="evidence" value="ECO:0007669"/>
    <property type="project" value="Ensembl"/>
</dbReference>
<dbReference type="GO" id="GO:0003690">
    <property type="term" value="F:double-stranded DNA binding"/>
    <property type="evidence" value="ECO:0007669"/>
    <property type="project" value="Ensembl"/>
</dbReference>
<dbReference type="GO" id="GO:0042803">
    <property type="term" value="F:protein homodimerization activity"/>
    <property type="evidence" value="ECO:0007669"/>
    <property type="project" value="Ensembl"/>
</dbReference>
<dbReference type="GO" id="GO:0006325">
    <property type="term" value="P:chromatin organization"/>
    <property type="evidence" value="ECO:0000250"/>
    <property type="project" value="UniProtKB"/>
</dbReference>
<dbReference type="GO" id="GO:0051276">
    <property type="term" value="P:chromosome organization"/>
    <property type="evidence" value="ECO:0007669"/>
    <property type="project" value="TreeGrafter"/>
</dbReference>
<dbReference type="GO" id="GO:0015074">
    <property type="term" value="P:DNA integration"/>
    <property type="evidence" value="ECO:0007669"/>
    <property type="project" value="Ensembl"/>
</dbReference>
<dbReference type="GO" id="GO:0007084">
    <property type="term" value="P:mitotic nuclear membrane reassembly"/>
    <property type="evidence" value="ECO:0000250"/>
    <property type="project" value="UniProtKB"/>
</dbReference>
<dbReference type="GO" id="GO:0160049">
    <property type="term" value="P:negative regulation of cGAS/STING signaling pathway"/>
    <property type="evidence" value="ECO:0007669"/>
    <property type="project" value="Ensembl"/>
</dbReference>
<dbReference type="GO" id="GO:0045824">
    <property type="term" value="P:negative regulation of innate immune response"/>
    <property type="evidence" value="ECO:0007669"/>
    <property type="project" value="Ensembl"/>
</dbReference>
<dbReference type="GO" id="GO:0010836">
    <property type="term" value="P:negative regulation of protein ADP-ribosylation"/>
    <property type="evidence" value="ECO:0000250"/>
    <property type="project" value="UniProtKB"/>
</dbReference>
<dbReference type="GO" id="GO:0032480">
    <property type="term" value="P:negative regulation of type I interferon production"/>
    <property type="evidence" value="ECO:0000250"/>
    <property type="project" value="UniProtKB"/>
</dbReference>
<dbReference type="GO" id="GO:0045071">
    <property type="term" value="P:negative regulation of viral genome replication"/>
    <property type="evidence" value="ECO:0007669"/>
    <property type="project" value="Ensembl"/>
</dbReference>
<dbReference type="GO" id="GO:0006979">
    <property type="term" value="P:response to oxidative stress"/>
    <property type="evidence" value="ECO:0000250"/>
    <property type="project" value="UniProtKB"/>
</dbReference>
<dbReference type="FunFam" id="1.10.150.40:FF:000001">
    <property type="entry name" value="Barrier-to-autointegration factor B"/>
    <property type="match status" value="1"/>
</dbReference>
<dbReference type="Gene3D" id="1.10.150.40">
    <property type="entry name" value="Barrier-to-autointegration factor, BAF"/>
    <property type="match status" value="1"/>
</dbReference>
<dbReference type="InterPro" id="IPR051387">
    <property type="entry name" value="BAF"/>
</dbReference>
<dbReference type="InterPro" id="IPR004122">
    <property type="entry name" value="BAF_prot"/>
</dbReference>
<dbReference type="InterPro" id="IPR036617">
    <property type="entry name" value="BAF_sf"/>
</dbReference>
<dbReference type="PANTHER" id="PTHR47507">
    <property type="entry name" value="BARRIER TO AUTOINTEGRATION FACTOR 2"/>
    <property type="match status" value="1"/>
</dbReference>
<dbReference type="PANTHER" id="PTHR47507:SF7">
    <property type="entry name" value="BARRIER-TO-AUTOINTEGRATION FACTOR"/>
    <property type="match status" value="1"/>
</dbReference>
<dbReference type="Pfam" id="PF02961">
    <property type="entry name" value="SAM_BAF"/>
    <property type="match status" value="1"/>
</dbReference>
<dbReference type="SMART" id="SM01023">
    <property type="entry name" value="BAF"/>
    <property type="match status" value="1"/>
</dbReference>
<dbReference type="SUPFAM" id="SSF47798">
    <property type="entry name" value="Barrier-to-autointegration factor, BAF"/>
    <property type="match status" value="1"/>
</dbReference>
<feature type="chain" id="PRO_0000423192" description="Barrier-to-autointegration factor">
    <location>
        <begin position="1"/>
        <end position="89"/>
    </location>
</feature>
<feature type="initiator methionine" description="Removed; alternate" evidence="1">
    <location>
        <position position="1"/>
    </location>
</feature>
<feature type="chain" id="PRO_0000221028" description="Barrier-to-autointegration factor, N-terminally processed">
    <location>
        <begin position="2"/>
        <end position="89"/>
    </location>
</feature>
<feature type="domain" description="HhH" evidence="1">
    <location>
        <begin position="20"/>
        <end position="35"/>
    </location>
</feature>
<feature type="modified residue" description="N-acetylmethionine" evidence="1">
    <location>
        <position position="1"/>
    </location>
</feature>
<feature type="modified residue" description="N-acetylthreonine; in Barrier-to-autointegration factor, N-terminally processed" evidence="1">
    <location>
        <position position="2"/>
    </location>
</feature>
<feature type="modified residue" description="Phosphothreonine; by VRK1 and VRK2" evidence="1">
    <location>
        <position position="2"/>
    </location>
</feature>
<feature type="modified residue" description="Phosphothreonine; by VRK1 and VRK2" evidence="1">
    <location>
        <position position="3"/>
    </location>
</feature>
<feature type="modified residue" description="Phosphoserine; by VRK1 and VRK2" evidence="1">
    <location>
        <position position="4"/>
    </location>
</feature>
<protein>
    <recommendedName>
        <fullName>Barrier-to-autointegration factor</fullName>
    </recommendedName>
    <component>
        <recommendedName>
            <fullName>Barrier-to-autointegration factor, N-terminally processed</fullName>
        </recommendedName>
    </component>
</protein>
<name>BAF_PONAB</name>
<accession>Q5RBU9</accession>
<organism>
    <name type="scientific">Pongo abelii</name>
    <name type="common">Sumatran orangutan</name>
    <name type="synonym">Pongo pygmaeus abelii</name>
    <dbReference type="NCBI Taxonomy" id="9601"/>
    <lineage>
        <taxon>Eukaryota</taxon>
        <taxon>Metazoa</taxon>
        <taxon>Chordata</taxon>
        <taxon>Craniata</taxon>
        <taxon>Vertebrata</taxon>
        <taxon>Euteleostomi</taxon>
        <taxon>Mammalia</taxon>
        <taxon>Eutheria</taxon>
        <taxon>Euarchontoglires</taxon>
        <taxon>Primates</taxon>
        <taxon>Haplorrhini</taxon>
        <taxon>Catarrhini</taxon>
        <taxon>Hominidae</taxon>
        <taxon>Pongo</taxon>
    </lineage>
</organism>
<reference key="1">
    <citation type="submission" date="2004-11" db="EMBL/GenBank/DDBJ databases">
        <authorList>
            <consortium name="The German cDNA consortium"/>
        </authorList>
    </citation>
    <scope>NUCLEOTIDE SEQUENCE [LARGE SCALE MRNA]</scope>
    <source>
        <tissue>Heart</tissue>
    </source>
</reference>